<organism>
    <name type="scientific">Leifsonia xyli subsp. xyli (strain CTCB07)</name>
    <dbReference type="NCBI Taxonomy" id="281090"/>
    <lineage>
        <taxon>Bacteria</taxon>
        <taxon>Bacillati</taxon>
        <taxon>Actinomycetota</taxon>
        <taxon>Actinomycetes</taxon>
        <taxon>Micrococcales</taxon>
        <taxon>Microbacteriaceae</taxon>
        <taxon>Leifsonia</taxon>
    </lineage>
</organism>
<comment type="subcellular location">
    <subcellularLocation>
        <location evidence="1">Cell membrane</location>
        <topology evidence="1">Lipid-anchor</topology>
    </subcellularLocation>
</comment>
<comment type="sequence caution" evidence="2">
    <conflict type="erroneous initiation">
        <sequence resource="EMBL-CDS" id="AAT89800"/>
    </conflict>
</comment>
<proteinExistence type="inferred from homology"/>
<dbReference type="EMBL" id="AE016822">
    <property type="protein sequence ID" value="AAT89800.1"/>
    <property type="status" value="ALT_INIT"/>
    <property type="molecule type" value="Genomic_DNA"/>
</dbReference>
<dbReference type="RefSeq" id="WP_041767763.1">
    <property type="nucleotide sequence ID" value="NC_006087.1"/>
</dbReference>
<dbReference type="SMR" id="Q6ACU3"/>
<dbReference type="STRING" id="281090.Lxx21020"/>
<dbReference type="KEGG" id="lxx:Lxx21020"/>
<dbReference type="eggNOG" id="COG2847">
    <property type="taxonomic scope" value="Bacteria"/>
</dbReference>
<dbReference type="HOGENOM" id="CLU_100939_0_0_11"/>
<dbReference type="Proteomes" id="UP000001306">
    <property type="component" value="Chromosome"/>
</dbReference>
<dbReference type="GO" id="GO:0005886">
    <property type="term" value="C:plasma membrane"/>
    <property type="evidence" value="ECO:0007669"/>
    <property type="project" value="UniProtKB-SubCell"/>
</dbReference>
<dbReference type="Gene3D" id="2.60.40.1890">
    <property type="entry name" value="PCu(A)C copper chaperone"/>
    <property type="match status" value="1"/>
</dbReference>
<dbReference type="InterPro" id="IPR007410">
    <property type="entry name" value="PCuAC"/>
</dbReference>
<dbReference type="InterPro" id="IPR036182">
    <property type="entry name" value="PCuAC_sf"/>
</dbReference>
<dbReference type="PANTHER" id="PTHR36302">
    <property type="entry name" value="BLR7088 PROTEIN"/>
    <property type="match status" value="1"/>
</dbReference>
<dbReference type="PANTHER" id="PTHR36302:SF1">
    <property type="entry name" value="COPPER CHAPERONE PCU(A)C"/>
    <property type="match status" value="1"/>
</dbReference>
<dbReference type="Pfam" id="PF04314">
    <property type="entry name" value="PCuAC"/>
    <property type="match status" value="1"/>
</dbReference>
<dbReference type="SUPFAM" id="SSF110087">
    <property type="entry name" value="DR1885-like metal-binding protein"/>
    <property type="match status" value="1"/>
</dbReference>
<dbReference type="PROSITE" id="PS51257">
    <property type="entry name" value="PROKAR_LIPOPROTEIN"/>
    <property type="match status" value="1"/>
</dbReference>
<evidence type="ECO:0000255" key="1">
    <source>
        <dbReference type="PROSITE-ProRule" id="PRU00303"/>
    </source>
</evidence>
<evidence type="ECO:0000305" key="2"/>
<accession>Q6ACU3</accession>
<reference key="1">
    <citation type="journal article" date="2004" name="Mol. Plant Microbe Interact.">
        <title>The genome sequence of the Gram-positive sugarcane pathogen Leifsonia xyli subsp. xyli.</title>
        <authorList>
            <person name="Monteiro-Vitorello C.B."/>
            <person name="Camargo L.E.A."/>
            <person name="Van Sluys M.A."/>
            <person name="Kitajima J.P."/>
            <person name="Truffi D."/>
            <person name="do Amaral A.M."/>
            <person name="Harakava R."/>
            <person name="de Oliveira J.C.F."/>
            <person name="Wood D."/>
            <person name="de Oliveira M.C."/>
            <person name="Miyaki C.Y."/>
            <person name="Takita M.A."/>
            <person name="da Silva A.C.R."/>
            <person name="Furlan L.R."/>
            <person name="Carraro D.M."/>
            <person name="Camarotte G."/>
            <person name="Almeida N.F. Jr."/>
            <person name="Carrer H."/>
            <person name="Coutinho L.L."/>
            <person name="El-Dorry H.A."/>
            <person name="Ferro M.I.T."/>
            <person name="Gagliardi P.R."/>
            <person name="Giglioti E."/>
            <person name="Goldman M.H.S."/>
            <person name="Goldman G.H."/>
            <person name="Kimura E.T."/>
            <person name="Ferro E.S."/>
            <person name="Kuramae E.E."/>
            <person name="Lemos E.G.M."/>
            <person name="Lemos M.V.F."/>
            <person name="Mauro S.M.Z."/>
            <person name="Machado M.A."/>
            <person name="Marino C.L."/>
            <person name="Menck C.F."/>
            <person name="Nunes L.R."/>
            <person name="Oliveira R.C."/>
            <person name="Pereira G.G."/>
            <person name="Siqueira W."/>
            <person name="de Souza A.A."/>
            <person name="Tsai S.M."/>
            <person name="Zanca A.S."/>
            <person name="Simpson A.J.G."/>
            <person name="Brumbley S.M."/>
            <person name="Setubal J.C."/>
        </authorList>
    </citation>
    <scope>NUCLEOTIDE SEQUENCE [LARGE SCALE GENOMIC DNA]</scope>
    <source>
        <strain>CTCB07</strain>
    </source>
</reference>
<reference key="2">
    <citation type="journal article" date="2007" name="Mol. Plant Pathol.">
        <title>Putative lipoproteins identified by bioinformatic genome analysis of Leifsonia xyli ssp. xyli, the causative agent of sugarcane ratoon stunting disease.</title>
        <authorList>
            <person name="Sutcliffe I.C."/>
            <person name="Hutchings M.I."/>
        </authorList>
        <dbReference type="AGRICOLA" id="IND43866162"/>
    </citation>
    <scope>DISCUSSION OF SEQUENCE</scope>
</reference>
<gene>
    <name type="ordered locus">Lxx21020</name>
</gene>
<feature type="signal peptide" evidence="1">
    <location>
        <begin position="1"/>
        <end position="22"/>
    </location>
</feature>
<feature type="chain" id="PRO_0000281075" description="Putative lipoprotein Lxx21020">
    <location>
        <begin position="23"/>
        <end position="166"/>
    </location>
</feature>
<feature type="lipid moiety-binding region" description="N-palmitoyl cysteine" evidence="1">
    <location>
        <position position="23"/>
    </location>
</feature>
<feature type="lipid moiety-binding region" description="S-diacylglycerol cysteine" evidence="1">
    <location>
        <position position="23"/>
    </location>
</feature>
<protein>
    <recommendedName>
        <fullName>Putative lipoprotein Lxx21020</fullName>
    </recommendedName>
</protein>
<name>Y2102_LEIXX</name>
<keyword id="KW-1003">Cell membrane</keyword>
<keyword id="KW-0449">Lipoprotein</keyword>
<keyword id="KW-0472">Membrane</keyword>
<keyword id="KW-0564">Palmitate</keyword>
<keyword id="KW-1185">Reference proteome</keyword>
<keyword id="KW-0732">Signal</keyword>
<sequence>MTKTTRLLRATTVAAILLGLTGCAVHLPASAQTPGKQADGVQVSKAWVKAAGSGMTAAFGDVKNTGSGTAIVVGATSSAASSLQLHETVTKNGAETMQEAKSGFRIPAGSTLHLAPGGSHIMLMGLKAPLEAGQKISVTLRFSDGSTSPVAVPVKDFSGANENYKG</sequence>